<proteinExistence type="evidence at protein level"/>
<organism>
    <name type="scientific">Catharanthus roseus</name>
    <name type="common">Madagascar periwinkle</name>
    <name type="synonym">Vinca rosea</name>
    <dbReference type="NCBI Taxonomy" id="4058"/>
    <lineage>
        <taxon>Eukaryota</taxon>
        <taxon>Viridiplantae</taxon>
        <taxon>Streptophyta</taxon>
        <taxon>Embryophyta</taxon>
        <taxon>Tracheophyta</taxon>
        <taxon>Spermatophyta</taxon>
        <taxon>Magnoliopsida</taxon>
        <taxon>eudicotyledons</taxon>
        <taxon>Gunneridae</taxon>
        <taxon>Pentapetalae</taxon>
        <taxon>asterids</taxon>
        <taxon>lamiids</taxon>
        <taxon>Gentianales</taxon>
        <taxon>Apocynaceae</taxon>
        <taxon>Rauvolfioideae</taxon>
        <taxon>Vinceae</taxon>
        <taxon>Catharanthinae</taxon>
        <taxon>Catharanthus</taxon>
    </lineage>
</organism>
<sequence>MGSIDSTNVAMSNSPVGEFKPLEAEEFRKQAHRMVDFIADYYKNVETYPVLSEVEPGYLRKRIPETAPYLPEPLDDIMKDIQKDIIPGMTNWMSPNFYAFFPATVSSAAFLGEMLSTALNSVGFTWVSSPAATELEMIVMDWLAQILKLPKSFMFSGTGGGVIQNTTSESILCTIIAARERALEKLGPDSIGKLVCYGSDQTHTMFPKTCKLAGIYPNNIRLIPTTVETDFGISPQVLRKMVEDDVAAGYVPLFLCATLGTTSTTATDPVDSLSEIANEFGIWIHVDAAYAGSACICPEFRHYLDGIERVDSLSLSPHKWLLAYLDCTCLWVKQPHLLLRALTTNPEYLKNKQSDLDKVVDFKNWQIATGRKFRSLKLWLILRSYGVVNLQSHIRSDVAMGKMFEEWVRSDSRFEIVVPRNFSLVCFRLKPDVSSLHVEEVNKKLLDMLNSTGRVYMTHTIVGGIYMLRLAVGSSLTEEHHVRRVWDLIQKLTDDLLKEA</sequence>
<protein>
    <recommendedName>
        <fullName evidence="7">Aromatic-L-amino-acid decarboxylase</fullName>
        <shortName evidence="7">AADC</shortName>
        <ecNumber evidence="2">4.1.1.28</ecNumber>
    </recommendedName>
    <alternativeName>
        <fullName evidence="7">DOPA decarboxylase</fullName>
    </alternativeName>
    <alternativeName>
        <fullName evidence="5">Tryptophan decarboxylase</fullName>
        <shortName evidence="6">CrTDC</shortName>
    </alternativeName>
</protein>
<keyword id="KW-0002">3D-structure</keyword>
<keyword id="KW-0210">Decarboxylase</keyword>
<keyword id="KW-0456">Lyase</keyword>
<keyword id="KW-0663">Pyridoxal phosphate</keyword>
<comment type="function">
    <text evidence="2 3">Catalyzes the decarboxylation of L-tryptophan to tryptamine and L-5-hydroxytryptophan to serotonin, respectively.</text>
</comment>
<comment type="catalytic activity">
    <reaction evidence="2">
        <text>L-tryptophan + H(+) = tryptamine + CO2</text>
        <dbReference type="Rhea" id="RHEA:30339"/>
        <dbReference type="ChEBI" id="CHEBI:15378"/>
        <dbReference type="ChEBI" id="CHEBI:16526"/>
        <dbReference type="ChEBI" id="CHEBI:57887"/>
        <dbReference type="ChEBI" id="CHEBI:57912"/>
        <dbReference type="EC" id="4.1.1.28"/>
    </reaction>
    <physiologicalReaction direction="left-to-right" evidence="2">
        <dbReference type="Rhea" id="RHEA:30340"/>
    </physiologicalReaction>
</comment>
<comment type="catalytic activity">
    <reaction evidence="2">
        <text>5-hydroxy-L-tryptophan + H(+) = serotonin + CO2</text>
        <dbReference type="Rhea" id="RHEA:18533"/>
        <dbReference type="ChEBI" id="CHEBI:15378"/>
        <dbReference type="ChEBI" id="CHEBI:16526"/>
        <dbReference type="ChEBI" id="CHEBI:58266"/>
        <dbReference type="ChEBI" id="CHEBI:350546"/>
        <dbReference type="EC" id="4.1.1.28"/>
    </reaction>
    <physiologicalReaction direction="left-to-right" evidence="2">
        <dbReference type="Rhea" id="RHEA:18534"/>
    </physiologicalReaction>
</comment>
<comment type="cofactor">
    <cofactor evidence="2">
        <name>pyridoxal 5'-phosphate</name>
        <dbReference type="ChEBI" id="CHEBI:597326"/>
    </cofactor>
</comment>
<comment type="biophysicochemical properties">
    <kinetics>
        <KM evidence="2">0.12 mM for L-tryptophan</KM>
        <Vmax evidence="2">2710.0 nmol/min/mg enzyme with L-tryptophan as substrate</Vmax>
    </kinetics>
</comment>
<comment type="subunit">
    <text evidence="4">Homodimer.</text>
</comment>
<comment type="similarity">
    <text evidence="7">Belongs to the group II decarboxylase family.</text>
</comment>
<feature type="chain" id="PRO_0000146944" description="Aromatic-L-amino-acid decarboxylase">
    <location>
        <begin position="1"/>
        <end position="500"/>
    </location>
</feature>
<feature type="binding site" evidence="4 8">
    <location>
        <position position="102"/>
    </location>
    <ligand>
        <name>L-tryptophan</name>
        <dbReference type="ChEBI" id="CHEBI:57912"/>
    </ligand>
</feature>
<feature type="binding site" evidence="1">
    <location>
        <position position="168"/>
    </location>
    <ligand>
        <name>pyridoxal 5'-phosphate</name>
        <dbReference type="ChEBI" id="CHEBI:597326"/>
    </ligand>
</feature>
<feature type="binding site" evidence="4 8">
    <location>
        <position position="203"/>
    </location>
    <ligand>
        <name>L-tryptophan</name>
        <dbReference type="ChEBI" id="CHEBI:57912"/>
    </ligand>
</feature>
<feature type="binding site" evidence="1">
    <location>
        <position position="262"/>
    </location>
    <ligand>
        <name>pyridoxal 5'-phosphate</name>
        <dbReference type="ChEBI" id="CHEBI:597326"/>
    </ligand>
</feature>
<feature type="binding site" evidence="4 8">
    <location>
        <position position="318"/>
    </location>
    <ligand>
        <name>L-tryptophan</name>
        <dbReference type="ChEBI" id="CHEBI:57912"/>
    </ligand>
</feature>
<feature type="binding site" evidence="4 8">
    <location>
        <position position="348"/>
    </location>
    <ligand>
        <name>L-tryptophan</name>
        <dbReference type="ChEBI" id="CHEBI:57912"/>
    </ligand>
</feature>
<feature type="modified residue" description="N6-(pyridoxal phosphate)lysine" evidence="4">
    <location>
        <position position="319"/>
    </location>
</feature>
<feature type="mutagenesis site" description="Acquires the capacity to produce indole-3-acetaldehyde from tryptophan." evidence="2 4">
    <original>Y</original>
    <variation>F</variation>
    <location>
        <position position="348"/>
    </location>
</feature>
<feature type="mutagenesis site" description="Acquires the capacity to produce dopamine from L-dopa and increased accumulation of phenylethylamine by gating indolic versus phenolic substrates." evidence="3 4">
    <original>G</original>
    <variation>S</variation>
    <location>
        <position position="370"/>
    </location>
</feature>
<feature type="sequence conflict" description="In Ref. 3; AYA72254." evidence="7" ref="3">
    <original>G</original>
    <variation>A</variation>
    <location>
        <position position="401"/>
    </location>
</feature>
<feature type="helix" evidence="9">
    <location>
        <begin position="24"/>
        <end position="44"/>
    </location>
</feature>
<feature type="helix" evidence="9">
    <location>
        <begin position="45"/>
        <end position="47"/>
    </location>
</feature>
<feature type="helix" evidence="9">
    <location>
        <begin position="58"/>
        <end position="61"/>
    </location>
</feature>
<feature type="helix" evidence="9">
    <location>
        <begin position="74"/>
        <end position="83"/>
    </location>
</feature>
<feature type="helix" evidence="9">
    <location>
        <begin position="86"/>
        <end position="88"/>
    </location>
</feature>
<feature type="strand" evidence="9">
    <location>
        <begin position="99"/>
        <end position="101"/>
    </location>
</feature>
<feature type="helix" evidence="9">
    <location>
        <begin position="107"/>
        <end position="119"/>
    </location>
</feature>
<feature type="strand" evidence="9">
    <location>
        <begin position="124"/>
        <end position="126"/>
    </location>
</feature>
<feature type="helix" evidence="9">
    <location>
        <begin position="130"/>
        <end position="146"/>
    </location>
</feature>
<feature type="helix" evidence="9">
    <location>
        <begin position="151"/>
        <end position="153"/>
    </location>
</feature>
<feature type="turn" evidence="9">
    <location>
        <begin position="155"/>
        <end position="158"/>
    </location>
</feature>
<feature type="strand" evidence="9">
    <location>
        <begin position="160"/>
        <end position="165"/>
    </location>
</feature>
<feature type="helix" evidence="9">
    <location>
        <begin position="167"/>
        <end position="186"/>
    </location>
</feature>
<feature type="helix" evidence="9">
    <location>
        <begin position="188"/>
        <end position="193"/>
    </location>
</feature>
<feature type="strand" evidence="9">
    <location>
        <begin position="194"/>
        <end position="199"/>
    </location>
</feature>
<feature type="helix" evidence="9">
    <location>
        <begin position="206"/>
        <end position="212"/>
    </location>
</feature>
<feature type="helix" evidence="9">
    <location>
        <begin position="217"/>
        <end position="219"/>
    </location>
</feature>
<feature type="strand" evidence="9">
    <location>
        <begin position="220"/>
        <end position="223"/>
    </location>
</feature>
<feature type="helix" evidence="9">
    <location>
        <begin position="227"/>
        <end position="229"/>
    </location>
</feature>
<feature type="helix" evidence="9">
    <location>
        <begin position="235"/>
        <end position="247"/>
    </location>
</feature>
<feature type="strand" evidence="9">
    <location>
        <begin position="251"/>
        <end position="260"/>
    </location>
</feature>
<feature type="turn" evidence="9">
    <location>
        <begin position="262"/>
        <end position="264"/>
    </location>
</feature>
<feature type="helix" evidence="9">
    <location>
        <begin position="270"/>
        <end position="280"/>
    </location>
</feature>
<feature type="strand" evidence="9">
    <location>
        <begin position="283"/>
        <end position="287"/>
    </location>
</feature>
<feature type="helix" evidence="9">
    <location>
        <begin position="291"/>
        <end position="296"/>
    </location>
</feature>
<feature type="helix" evidence="9">
    <location>
        <begin position="298"/>
        <end position="301"/>
    </location>
</feature>
<feature type="helix" evidence="9">
    <location>
        <begin position="302"/>
        <end position="304"/>
    </location>
</feature>
<feature type="helix" evidence="9">
    <location>
        <begin position="307"/>
        <end position="309"/>
    </location>
</feature>
<feature type="strand" evidence="9">
    <location>
        <begin position="311"/>
        <end position="315"/>
    </location>
</feature>
<feature type="strand" evidence="9">
    <location>
        <begin position="328"/>
        <end position="333"/>
    </location>
</feature>
<feature type="helix" evidence="9">
    <location>
        <begin position="335"/>
        <end position="341"/>
    </location>
</feature>
<feature type="helix" evidence="9">
    <location>
        <begin position="346"/>
        <end position="350"/>
    </location>
</feature>
<feature type="helix" evidence="9">
    <location>
        <begin position="362"/>
        <end position="365"/>
    </location>
</feature>
<feature type="strand" evidence="9">
    <location>
        <begin position="366"/>
        <end position="369"/>
    </location>
</feature>
<feature type="helix" evidence="9">
    <location>
        <begin position="375"/>
        <end position="409"/>
    </location>
</feature>
<feature type="strand" evidence="9">
    <location>
        <begin position="414"/>
        <end position="416"/>
    </location>
</feature>
<feature type="strand" evidence="9">
    <location>
        <begin position="422"/>
        <end position="429"/>
    </location>
</feature>
<feature type="helix" evidence="9">
    <location>
        <begin position="431"/>
        <end position="433"/>
    </location>
</feature>
<feature type="strand" evidence="9">
    <location>
        <begin position="434"/>
        <end position="436"/>
    </location>
</feature>
<feature type="helix" evidence="9">
    <location>
        <begin position="438"/>
        <end position="451"/>
    </location>
</feature>
<feature type="strand" evidence="9">
    <location>
        <begin position="459"/>
        <end position="462"/>
    </location>
</feature>
<feature type="strand" evidence="9">
    <location>
        <begin position="465"/>
        <end position="471"/>
    </location>
</feature>
<feature type="helix" evidence="9">
    <location>
        <begin position="479"/>
        <end position="496"/>
    </location>
</feature>
<gene>
    <name evidence="5" type="primary">TDC</name>
</gene>
<evidence type="ECO:0000250" key="1"/>
<evidence type="ECO:0000269" key="2">
    <source>
    </source>
</evidence>
<evidence type="ECO:0000269" key="3">
    <source>
    </source>
</evidence>
<evidence type="ECO:0000269" key="4">
    <source>
    </source>
</evidence>
<evidence type="ECO:0000303" key="5">
    <source>
    </source>
</evidence>
<evidence type="ECO:0000303" key="6">
    <source>
    </source>
</evidence>
<evidence type="ECO:0000305" key="7"/>
<evidence type="ECO:0007744" key="8">
    <source>
        <dbReference type="PDB" id="6EEW"/>
    </source>
</evidence>
<evidence type="ECO:0007829" key="9">
    <source>
        <dbReference type="PDB" id="6EEW"/>
    </source>
</evidence>
<reference key="1">
    <citation type="journal article" date="1989" name="Proc. Natl. Acad. Sci. U.S.A.">
        <title>Molecular cloning and analysis of cDNA encoding a plant tryptophan decarboxylase: comparison with animal dopa decarboxylases.</title>
        <authorList>
            <person name="de Luca V."/>
            <person name="Marineau C."/>
            <person name="Brisson N."/>
        </authorList>
    </citation>
    <scope>NUCLEOTIDE SEQUENCE [MRNA]</scope>
</reference>
<reference key="2">
    <citation type="journal article" date="1994" name="Mol. Gen. Genet.">
        <title>Nucleotide sequence of the tryptophan decarboxylase gene of Catharanthus roseus and expression of tdc-gusA gene fusions in Nicotiana tabacum.</title>
        <authorList>
            <person name="Goddijn O.J.M."/>
            <person name="Lohman F.P."/>
            <person name="de Kam R.J."/>
            <person name="Schilperoort R.A."/>
            <person name="Hoge J.H.C."/>
        </authorList>
    </citation>
    <scope>NUCLEOTIDE SEQUENCE [GENOMIC DNA]</scope>
    <source>
        <strain>cv. Morning mist</strain>
        <tissue>Leaf</tissue>
    </source>
</reference>
<reference key="3">
    <citation type="journal article" date="2020" name="Proc. Natl. Acad. Sci. U.S.A.">
        <title>Structural basis for divergent and convergent evolution of catalytic machineries in plant aromatic amino acid decarboxylase proteins.</title>
        <authorList>
            <person name="Torrens-Spence M.P."/>
            <person name="Chiang Y.-C."/>
            <person name="Smith T."/>
            <person name="Vicent M.A."/>
            <person name="Wang Y."/>
            <person name="Weng J.-K."/>
        </authorList>
    </citation>
    <scope>NUCLEOTIDE SEQUENCE [MRNA]</scope>
    <scope>X-RAY CRYSTALLOGRAPHY (2.05 ANGSTROMS) IN COMPLEX WITH L-TRYPTOPHAN AND PYRIDOXAL PHOSPHATE</scope>
    <scope>SUBUNIT</scope>
    <scope>MUTAGENESIS OF TYR-348 AND GLY-370</scope>
</reference>
<reference key="4">
    <citation type="journal article" date="2013" name="J. Biol. Chem.">
        <title>Biochemical evaluation of the decarboxylation and decarboxylation-deamination activities of plant aromatic amino acid decarboxylases.</title>
        <authorList>
            <person name="Torrens-Spence M.P."/>
            <person name="Liu P."/>
            <person name="Ding H."/>
            <person name="Harich K."/>
            <person name="Gillaspy G."/>
            <person name="Li J."/>
        </authorList>
    </citation>
    <scope>FUNCTION</scope>
    <scope>CATALYTIC ACTIVITY</scope>
    <scope>COFACTOR</scope>
    <scope>BIOPHYSICOCHEMICAL PROPERTIES</scope>
    <scope>MUTAGENESIS OF TYR-348</scope>
</reference>
<reference key="5">
    <citation type="journal article" date="2014" name="Phytochemistry">
        <title>Investigation of a substrate-specifying residue within Papaver somniferum and Catharanthus roseus aromatic amino acid decarboxylases.</title>
        <authorList>
            <person name="Torrens-Spence M.P."/>
            <person name="Lazear M."/>
            <person name="von Guggenberg R."/>
            <person name="Ding H."/>
            <person name="Li J."/>
        </authorList>
    </citation>
    <scope>FUNCTION</scope>
    <scope>MUTAGENESIS OF GLY-370</scope>
</reference>
<accession>P17770</accession>
<accession>A0A3S7SKS7</accession>
<dbReference type="EC" id="4.1.1.28" evidence="2"/>
<dbReference type="EMBL" id="M25151">
    <property type="protein sequence ID" value="AAA33109.1"/>
    <property type="molecule type" value="mRNA"/>
</dbReference>
<dbReference type="EMBL" id="X67662">
    <property type="protein sequence ID" value="CAA47898.1"/>
    <property type="molecule type" value="Genomic_DNA"/>
</dbReference>
<dbReference type="EMBL" id="MG748691">
    <property type="protein sequence ID" value="AYA72254.1"/>
    <property type="molecule type" value="mRNA"/>
</dbReference>
<dbReference type="PIR" id="A32103">
    <property type="entry name" value="DCJAAP"/>
</dbReference>
<dbReference type="PDB" id="6EEW">
    <property type="method" value="X-ray"/>
    <property type="resolution" value="2.05 A"/>
    <property type="chains" value="A/B/C/D=1-500"/>
</dbReference>
<dbReference type="PDBsum" id="6EEW"/>
<dbReference type="SMR" id="P17770"/>
<dbReference type="MINT" id="P17770"/>
<dbReference type="KEGG" id="ag:CAA47898"/>
<dbReference type="BioCyc" id="MetaCyc:MONOMER-11583"/>
<dbReference type="BRENDA" id="4.1.1.105">
    <property type="organism ID" value="1211"/>
</dbReference>
<dbReference type="BRENDA" id="4.1.1.28">
    <property type="organism ID" value="1211"/>
</dbReference>
<dbReference type="GO" id="GO:0005737">
    <property type="term" value="C:cytoplasm"/>
    <property type="evidence" value="ECO:0007669"/>
    <property type="project" value="TreeGrafter"/>
</dbReference>
<dbReference type="GO" id="GO:0036467">
    <property type="term" value="F:5-hydroxy-L-tryptophan decarboxylase activity"/>
    <property type="evidence" value="ECO:0007669"/>
    <property type="project" value="RHEA"/>
</dbReference>
<dbReference type="GO" id="GO:0036469">
    <property type="term" value="F:L-tryptophan decarboxylase activity"/>
    <property type="evidence" value="ECO:0007669"/>
    <property type="project" value="RHEA"/>
</dbReference>
<dbReference type="GO" id="GO:0030170">
    <property type="term" value="F:pyridoxal phosphate binding"/>
    <property type="evidence" value="ECO:0007669"/>
    <property type="project" value="InterPro"/>
</dbReference>
<dbReference type="GO" id="GO:0006520">
    <property type="term" value="P:amino acid metabolic process"/>
    <property type="evidence" value="ECO:0007669"/>
    <property type="project" value="InterPro"/>
</dbReference>
<dbReference type="GO" id="GO:0019752">
    <property type="term" value="P:carboxylic acid metabolic process"/>
    <property type="evidence" value="ECO:0007669"/>
    <property type="project" value="InterPro"/>
</dbReference>
<dbReference type="CDD" id="cd06450">
    <property type="entry name" value="DOPA_deC_like"/>
    <property type="match status" value="1"/>
</dbReference>
<dbReference type="FunFam" id="3.40.640.10:FF:000025">
    <property type="entry name" value="Histidine decarboxylase"/>
    <property type="match status" value="1"/>
</dbReference>
<dbReference type="Gene3D" id="3.90.1150.10">
    <property type="entry name" value="Aspartate Aminotransferase, domain 1"/>
    <property type="match status" value="1"/>
</dbReference>
<dbReference type="Gene3D" id="1.20.1340.10">
    <property type="entry name" value="dopa decarboxylase, N-terminal domain"/>
    <property type="match status" value="1"/>
</dbReference>
<dbReference type="Gene3D" id="3.40.640.10">
    <property type="entry name" value="Type I PLP-dependent aspartate aminotransferase-like (Major domain)"/>
    <property type="match status" value="1"/>
</dbReference>
<dbReference type="InterPro" id="IPR010977">
    <property type="entry name" value="Aromatic_deC"/>
</dbReference>
<dbReference type="InterPro" id="IPR002129">
    <property type="entry name" value="PyrdxlP-dep_de-COase"/>
</dbReference>
<dbReference type="InterPro" id="IPR015424">
    <property type="entry name" value="PyrdxlP-dep_Trfase"/>
</dbReference>
<dbReference type="InterPro" id="IPR015421">
    <property type="entry name" value="PyrdxlP-dep_Trfase_major"/>
</dbReference>
<dbReference type="InterPro" id="IPR015422">
    <property type="entry name" value="PyrdxlP-dep_Trfase_small"/>
</dbReference>
<dbReference type="InterPro" id="IPR021115">
    <property type="entry name" value="Pyridoxal-P_BS"/>
</dbReference>
<dbReference type="PANTHER" id="PTHR11999">
    <property type="entry name" value="GROUP II PYRIDOXAL-5-PHOSPHATE DECARBOXYLASE"/>
    <property type="match status" value="1"/>
</dbReference>
<dbReference type="PANTHER" id="PTHR11999:SF157">
    <property type="entry name" value="TRYPTOPHAN DECARBOXYLASE 1"/>
    <property type="match status" value="1"/>
</dbReference>
<dbReference type="Pfam" id="PF00282">
    <property type="entry name" value="Pyridoxal_deC"/>
    <property type="match status" value="1"/>
</dbReference>
<dbReference type="PRINTS" id="PR00800">
    <property type="entry name" value="YHDCRBOXLASE"/>
</dbReference>
<dbReference type="SUPFAM" id="SSF53383">
    <property type="entry name" value="PLP-dependent transferases"/>
    <property type="match status" value="1"/>
</dbReference>
<dbReference type="PROSITE" id="PS00392">
    <property type="entry name" value="DDC_GAD_HDC_YDC"/>
    <property type="match status" value="1"/>
</dbReference>
<name>TDC_CATRO</name>